<comment type="function">
    <text evidence="2">Catalyzes the hydrolysis of N(4)-acetylcytidine (ac4C).</text>
</comment>
<comment type="catalytic activity">
    <reaction evidence="2">
        <text>N(4)-acetylcytidine + H2O = cytidine + acetate + H(+)</text>
        <dbReference type="Rhea" id="RHEA:62932"/>
        <dbReference type="ChEBI" id="CHEBI:15377"/>
        <dbReference type="ChEBI" id="CHEBI:15378"/>
        <dbReference type="ChEBI" id="CHEBI:17562"/>
        <dbReference type="ChEBI" id="CHEBI:30089"/>
        <dbReference type="ChEBI" id="CHEBI:70989"/>
        <dbReference type="EC" id="3.5.1.135"/>
    </reaction>
</comment>
<comment type="catalytic activity">
    <reaction evidence="2">
        <text>N(4)-acetyl-2'-deoxycytidine + H2O = 2'-deoxycytidine + acetate + H(+)</text>
        <dbReference type="Rhea" id="RHEA:62936"/>
        <dbReference type="ChEBI" id="CHEBI:15377"/>
        <dbReference type="ChEBI" id="CHEBI:15378"/>
        <dbReference type="ChEBI" id="CHEBI:15698"/>
        <dbReference type="ChEBI" id="CHEBI:30089"/>
        <dbReference type="ChEBI" id="CHEBI:146133"/>
        <dbReference type="EC" id="3.5.1.135"/>
    </reaction>
</comment>
<comment type="catalytic activity">
    <reaction evidence="2">
        <text>N(4)-acetylcytosine + H2O = cytosine + acetate + H(+)</text>
        <dbReference type="Rhea" id="RHEA:62940"/>
        <dbReference type="ChEBI" id="CHEBI:15377"/>
        <dbReference type="ChEBI" id="CHEBI:15378"/>
        <dbReference type="ChEBI" id="CHEBI:16040"/>
        <dbReference type="ChEBI" id="CHEBI:30089"/>
        <dbReference type="ChEBI" id="CHEBI:146134"/>
        <dbReference type="EC" id="3.5.1.135"/>
    </reaction>
</comment>
<comment type="similarity">
    <text evidence="2">Belongs to the N(4)-acetylcytidine amidohydrolase family.</text>
</comment>
<keyword id="KW-0378">Hydrolase</keyword>
<sequence>MYSCITFFQRLERSILSGNKTATIRDKSDSHYLVGQMLDACTHEDNRKMCQIEILSIEYVTFSELNRAHANAEGLPFLFMLKWIVRKIYPTSNDLFFISFRVVTIDIL</sequence>
<feature type="chain" id="PRO_0000214609" description="N(4)-acetylcytidine amidohydrolase">
    <location>
        <begin position="1"/>
        <end position="108"/>
    </location>
</feature>
<feature type="domain" description="ASCH" evidence="1">
    <location>
        <begin position="5"/>
        <end position="102"/>
    </location>
</feature>
<feature type="active site" description="Proton acceptor" evidence="2">
    <location>
        <position position="20"/>
    </location>
</feature>
<feature type="active site" description="Nucleophile" evidence="2">
    <location>
        <position position="23"/>
    </location>
</feature>
<feature type="active site" description="Proton donor" evidence="2">
    <location>
        <position position="73"/>
    </location>
</feature>
<dbReference type="EC" id="3.5.1.135" evidence="2"/>
<dbReference type="EMBL" id="AB025342">
    <property type="protein sequence ID" value="BAA89390.1"/>
    <property type="molecule type" value="Genomic_DNA"/>
</dbReference>
<dbReference type="RefSeq" id="WP_019440105.1">
    <property type="nucleotide sequence ID" value="NZ_CAXYEI010000009.1"/>
</dbReference>
<dbReference type="SMR" id="Q9RA13"/>
<dbReference type="GO" id="GO:0005829">
    <property type="term" value="C:cytosol"/>
    <property type="evidence" value="ECO:0007669"/>
    <property type="project" value="TreeGrafter"/>
</dbReference>
<dbReference type="GO" id="GO:0016813">
    <property type="term" value="F:hydrolase activity, acting on carbon-nitrogen (but not peptide) bonds, in linear amidines"/>
    <property type="evidence" value="ECO:0007669"/>
    <property type="project" value="UniProtKB-UniRule"/>
</dbReference>
<dbReference type="GO" id="GO:0106251">
    <property type="term" value="F:N4-acetylcytidine amidohydrolase activity"/>
    <property type="evidence" value="ECO:0007669"/>
    <property type="project" value="RHEA"/>
</dbReference>
<dbReference type="CDD" id="cd06552">
    <property type="entry name" value="ASCH_yqfb_like"/>
    <property type="match status" value="1"/>
</dbReference>
<dbReference type="Gene3D" id="2.30.130.30">
    <property type="entry name" value="Hypothetical protein"/>
    <property type="match status" value="1"/>
</dbReference>
<dbReference type="HAMAP" id="MF_00684">
    <property type="entry name" value="ac4C_amidohydr"/>
    <property type="match status" value="1"/>
</dbReference>
<dbReference type="InterPro" id="IPR008314">
    <property type="entry name" value="AC4CH"/>
</dbReference>
<dbReference type="InterPro" id="IPR007374">
    <property type="entry name" value="ASCH_domain"/>
</dbReference>
<dbReference type="InterPro" id="IPR015947">
    <property type="entry name" value="PUA-like_sf"/>
</dbReference>
<dbReference type="NCBIfam" id="NF003443">
    <property type="entry name" value="PRK04980.1"/>
    <property type="match status" value="1"/>
</dbReference>
<dbReference type="PANTHER" id="PTHR38088">
    <property type="entry name" value="UCP029143 FAMILY PROTEIN"/>
    <property type="match status" value="1"/>
</dbReference>
<dbReference type="PANTHER" id="PTHR38088:SF2">
    <property type="entry name" value="UCP029143 FAMILY PROTEIN"/>
    <property type="match status" value="1"/>
</dbReference>
<dbReference type="Pfam" id="PF04266">
    <property type="entry name" value="ASCH"/>
    <property type="match status" value="1"/>
</dbReference>
<dbReference type="PIRSF" id="PIRSF029143">
    <property type="entry name" value="UCP029143"/>
    <property type="match status" value="1"/>
</dbReference>
<dbReference type="SMART" id="SM01022">
    <property type="entry name" value="ASCH"/>
    <property type="match status" value="1"/>
</dbReference>
<dbReference type="SUPFAM" id="SSF88697">
    <property type="entry name" value="PUA domain-like"/>
    <property type="match status" value="1"/>
</dbReference>
<accession>Q9RA13</accession>
<proteinExistence type="inferred from homology"/>
<protein>
    <recommendedName>
        <fullName evidence="2">N(4)-acetylcytidine amidohydrolase</fullName>
        <shortName evidence="2">ac4C amidohydrolase</shortName>
        <ecNumber evidence="2">3.5.1.135</ecNumber>
    </recommendedName>
</protein>
<organism>
    <name type="scientific">Moritella marina</name>
    <name type="common">Vibrio marinus</name>
    <dbReference type="NCBI Taxonomy" id="90736"/>
    <lineage>
        <taxon>Bacteria</taxon>
        <taxon>Pseudomonadati</taxon>
        <taxon>Pseudomonadota</taxon>
        <taxon>Gammaproteobacteria</taxon>
        <taxon>Alteromonadales</taxon>
        <taxon>Moritellaceae</taxon>
        <taxon>Moritella</taxon>
    </lineage>
</organism>
<reference key="1">
    <citation type="journal article" date="1999" name="Biotechnol. Lett.">
        <title>Isolation of clustered genes that are notably homologous to the eicosapentaenoic acid biosynthesis gene cluster from the docosahexaenoic acid-producing bacterium Vibrio marinus strain MP-1.</title>
        <authorList>
            <person name="Tanaka M."/>
            <person name="Ueno A."/>
            <person name="Kawasaki K."/>
            <person name="Yumoto I."/>
            <person name="Ohgiya S."/>
            <person name="Hoshino T."/>
            <person name="Ishizaki K."/>
            <person name="Okuyama H."/>
            <person name="Morita N."/>
        </authorList>
    </citation>
    <scope>NUCLEOTIDE SEQUENCE [GENOMIC DNA]</scope>
    <source>
        <strain>ATCC 15381 / BCRC 15891 / CIP 102861 / NCIMB 1144 / MP-1</strain>
    </source>
</reference>
<name>AC4CH_MORMI</name>
<evidence type="ECO:0000255" key="1"/>
<evidence type="ECO:0000255" key="2">
    <source>
        <dbReference type="HAMAP-Rule" id="MF_00684"/>
    </source>
</evidence>